<keyword id="KW-0067">ATP-binding</keyword>
<keyword id="KW-0347">Helicase</keyword>
<keyword id="KW-0378">Hydrolase</keyword>
<keyword id="KW-0547">Nucleotide-binding</keyword>
<keyword id="KW-0539">Nucleus</keyword>
<keyword id="KW-1185">Reference proteome</keyword>
<keyword id="KW-0690">Ribosome biogenesis</keyword>
<keyword id="KW-0694">RNA-binding</keyword>
<keyword id="KW-0698">rRNA processing</keyword>
<sequence length="433" mass="47909">MSFKDLGVSKWLLEALAAMKIRSPTSIQAECIPQILAGRDCIGGAKTGSGKTIAFAAPMMTKWSEDPFGIYGLVLTPTRELALQIAEQFLALGASMNIKVAVVVGGEDMVKQALEIQKSPHFIIATPGRLADHILNSGDDTVGGLKRIKFLVLDEADRLLSNSFGSDLERCFKILPDASKRQTLLFTATVTDAVRALKDKPVPEGKKPVFIHEIVSKDQVAIPATLTISYVFVPSYVKEAYLHNILVSPKYEKASAIVFVNRTYTAEILRRTLRKLDIRVASLHSEMPQSERTNSLHRFRAGAARVLIATDVASRGLDIPNVELVVNQDIPADPDDYIHRVGRTARAGKKGGSVSIVSEKDVERILAIENHINKKMDLLEEVNDDKIIKESLSIVTAAKRESVADMEKEGFGEKRKINKRKREERTRDSKKRK</sequence>
<organism>
    <name type="scientific">Meyerozyma guilliermondii (strain ATCC 6260 / CBS 566 / DSM 6381 / JCM 1539 / NBRC 10279 / NRRL Y-324)</name>
    <name type="common">Yeast</name>
    <name type="synonym">Candida guilliermondii</name>
    <dbReference type="NCBI Taxonomy" id="294746"/>
    <lineage>
        <taxon>Eukaryota</taxon>
        <taxon>Fungi</taxon>
        <taxon>Dikarya</taxon>
        <taxon>Ascomycota</taxon>
        <taxon>Saccharomycotina</taxon>
        <taxon>Pichiomycetes</taxon>
        <taxon>Debaryomycetaceae</taxon>
        <taxon>Meyerozyma</taxon>
    </lineage>
</organism>
<reference key="1">
    <citation type="journal article" date="2009" name="Nature">
        <title>Evolution of pathogenicity and sexual reproduction in eight Candida genomes.</title>
        <authorList>
            <person name="Butler G."/>
            <person name="Rasmussen M.D."/>
            <person name="Lin M.F."/>
            <person name="Santos M.A.S."/>
            <person name="Sakthikumar S."/>
            <person name="Munro C.A."/>
            <person name="Rheinbay E."/>
            <person name="Grabherr M."/>
            <person name="Forche A."/>
            <person name="Reedy J.L."/>
            <person name="Agrafioti I."/>
            <person name="Arnaud M.B."/>
            <person name="Bates S."/>
            <person name="Brown A.J.P."/>
            <person name="Brunke S."/>
            <person name="Costanzo M.C."/>
            <person name="Fitzpatrick D.A."/>
            <person name="de Groot P.W.J."/>
            <person name="Harris D."/>
            <person name="Hoyer L.L."/>
            <person name="Hube B."/>
            <person name="Klis F.M."/>
            <person name="Kodira C."/>
            <person name="Lennard N."/>
            <person name="Logue M.E."/>
            <person name="Martin R."/>
            <person name="Neiman A.M."/>
            <person name="Nikolaou E."/>
            <person name="Quail M.A."/>
            <person name="Quinn J."/>
            <person name="Santos M.C."/>
            <person name="Schmitzberger F.F."/>
            <person name="Sherlock G."/>
            <person name="Shah P."/>
            <person name="Silverstein K.A.T."/>
            <person name="Skrzypek M.S."/>
            <person name="Soll D."/>
            <person name="Staggs R."/>
            <person name="Stansfield I."/>
            <person name="Stumpf M.P.H."/>
            <person name="Sudbery P.E."/>
            <person name="Srikantha T."/>
            <person name="Zeng Q."/>
            <person name="Berman J."/>
            <person name="Berriman M."/>
            <person name="Heitman J."/>
            <person name="Gow N.A.R."/>
            <person name="Lorenz M.C."/>
            <person name="Birren B.W."/>
            <person name="Kellis M."/>
            <person name="Cuomo C.A."/>
        </authorList>
    </citation>
    <scope>NUCLEOTIDE SEQUENCE [LARGE SCALE GENOMIC DNA]</scope>
    <source>
        <strain>ATCC 6260 / CBS 566 / DSM 6381 / JCM 1539 / NBRC 10279 / NRRL Y-324</strain>
    </source>
</reference>
<gene>
    <name type="primary">DBP8</name>
    <name type="ORF">PGUG_04091</name>
</gene>
<comment type="function">
    <text evidence="1">ATP-binding RNA helicase involved in 40S ribosomal subunit biogenesis and is required for the normal formation of 18S rRNAs through pre-rRNA processing at A0, A1 and A2 sites. Required for vegetative growth (By similarity).</text>
</comment>
<comment type="catalytic activity">
    <reaction>
        <text>ATP + H2O = ADP + phosphate + H(+)</text>
        <dbReference type="Rhea" id="RHEA:13065"/>
        <dbReference type="ChEBI" id="CHEBI:15377"/>
        <dbReference type="ChEBI" id="CHEBI:15378"/>
        <dbReference type="ChEBI" id="CHEBI:30616"/>
        <dbReference type="ChEBI" id="CHEBI:43474"/>
        <dbReference type="ChEBI" id="CHEBI:456216"/>
        <dbReference type="EC" id="3.6.4.13"/>
    </reaction>
</comment>
<comment type="subcellular location">
    <subcellularLocation>
        <location evidence="1">Nucleus</location>
        <location evidence="1">Nucleolus</location>
    </subcellularLocation>
</comment>
<comment type="domain">
    <text>The Q motif is unique to and characteristic of the DEAD box family of RNA helicases and controls ATP binding and hydrolysis.</text>
</comment>
<comment type="similarity">
    <text evidence="5">Belongs to the DEAD box helicase family. DDX49/DBP8 subfamily.</text>
</comment>
<feature type="chain" id="PRO_0000294657" description="ATP-dependent RNA helicase DBP8">
    <location>
        <begin position="1"/>
        <end position="433"/>
    </location>
</feature>
<feature type="domain" description="Helicase ATP-binding" evidence="2">
    <location>
        <begin position="32"/>
        <end position="208"/>
    </location>
</feature>
<feature type="domain" description="Helicase C-terminal" evidence="3">
    <location>
        <begin position="247"/>
        <end position="387"/>
    </location>
</feature>
<feature type="region of interest" description="Disordered" evidence="4">
    <location>
        <begin position="401"/>
        <end position="433"/>
    </location>
</feature>
<feature type="short sequence motif" description="Q motif">
    <location>
        <begin position="1"/>
        <end position="29"/>
    </location>
</feature>
<feature type="short sequence motif" description="DEAD box">
    <location>
        <begin position="154"/>
        <end position="157"/>
    </location>
</feature>
<feature type="compositionally biased region" description="Basic and acidic residues" evidence="4">
    <location>
        <begin position="401"/>
        <end position="427"/>
    </location>
</feature>
<feature type="binding site" evidence="2">
    <location>
        <begin position="45"/>
        <end position="52"/>
    </location>
    <ligand>
        <name>ATP</name>
        <dbReference type="ChEBI" id="CHEBI:30616"/>
    </ligand>
</feature>
<name>DBP8_PICGU</name>
<protein>
    <recommendedName>
        <fullName>ATP-dependent RNA helicase DBP8</fullName>
        <ecNumber>3.6.4.13</ecNumber>
    </recommendedName>
</protein>
<dbReference type="EC" id="3.6.4.13"/>
<dbReference type="EMBL" id="CH408159">
    <property type="protein sequence ID" value="EDK39993.2"/>
    <property type="molecule type" value="Genomic_DNA"/>
</dbReference>
<dbReference type="RefSeq" id="XP_001483362.1">
    <property type="nucleotide sequence ID" value="XM_001483312.1"/>
</dbReference>
<dbReference type="SMR" id="A5DLE0"/>
<dbReference type="FunCoup" id="A5DLE0">
    <property type="interactions" value="848"/>
</dbReference>
<dbReference type="STRING" id="294746.A5DLE0"/>
<dbReference type="GeneID" id="5125427"/>
<dbReference type="KEGG" id="pgu:PGUG_04091"/>
<dbReference type="VEuPathDB" id="FungiDB:PGUG_04091"/>
<dbReference type="eggNOG" id="KOG0340">
    <property type="taxonomic scope" value="Eukaryota"/>
</dbReference>
<dbReference type="HOGENOM" id="CLU_003041_1_1_1"/>
<dbReference type="InParanoid" id="A5DLE0"/>
<dbReference type="OMA" id="IMIFTDT"/>
<dbReference type="OrthoDB" id="10261904at2759"/>
<dbReference type="Proteomes" id="UP000001997">
    <property type="component" value="Unassembled WGS sequence"/>
</dbReference>
<dbReference type="GO" id="GO:0005829">
    <property type="term" value="C:cytosol"/>
    <property type="evidence" value="ECO:0007669"/>
    <property type="project" value="TreeGrafter"/>
</dbReference>
<dbReference type="GO" id="GO:0005730">
    <property type="term" value="C:nucleolus"/>
    <property type="evidence" value="ECO:0007669"/>
    <property type="project" value="UniProtKB-SubCell"/>
</dbReference>
<dbReference type="GO" id="GO:0032040">
    <property type="term" value="C:small-subunit processome"/>
    <property type="evidence" value="ECO:0007669"/>
    <property type="project" value="EnsemblFungi"/>
</dbReference>
<dbReference type="GO" id="GO:0005524">
    <property type="term" value="F:ATP binding"/>
    <property type="evidence" value="ECO:0007669"/>
    <property type="project" value="UniProtKB-KW"/>
</dbReference>
<dbReference type="GO" id="GO:0016887">
    <property type="term" value="F:ATP hydrolysis activity"/>
    <property type="evidence" value="ECO:0007669"/>
    <property type="project" value="EnsemblFungi"/>
</dbReference>
<dbReference type="GO" id="GO:0003723">
    <property type="term" value="F:RNA binding"/>
    <property type="evidence" value="ECO:0007669"/>
    <property type="project" value="UniProtKB-KW"/>
</dbReference>
<dbReference type="GO" id="GO:0003724">
    <property type="term" value="F:RNA helicase activity"/>
    <property type="evidence" value="ECO:0007669"/>
    <property type="project" value="UniProtKB-EC"/>
</dbReference>
<dbReference type="GO" id="GO:0000480">
    <property type="term" value="P:endonucleolytic cleavage in 5'-ETS of tricistronic rRNA transcript (SSU-rRNA, 5.8S rRNA, LSU-rRNA)"/>
    <property type="evidence" value="ECO:0007669"/>
    <property type="project" value="EnsemblFungi"/>
</dbReference>
<dbReference type="GO" id="GO:0000447">
    <property type="term" value="P:endonucleolytic cleavage in ITS1 to separate SSU-rRNA from 5.8S rRNA and LSU-rRNA from tricistronic rRNA transcript (SSU-rRNA, 5.8S rRNA, LSU-rRNA)"/>
    <property type="evidence" value="ECO:0007669"/>
    <property type="project" value="EnsemblFungi"/>
</dbReference>
<dbReference type="GO" id="GO:0000472">
    <property type="term" value="P:endonucleolytic cleavage to generate mature 5'-end of SSU-rRNA from (SSU-rRNA, 5.8S rRNA, LSU-rRNA)"/>
    <property type="evidence" value="ECO:0007669"/>
    <property type="project" value="EnsemblFungi"/>
</dbReference>
<dbReference type="CDD" id="cd17955">
    <property type="entry name" value="DEADc_DDX49"/>
    <property type="match status" value="1"/>
</dbReference>
<dbReference type="CDD" id="cd18787">
    <property type="entry name" value="SF2_C_DEAD"/>
    <property type="match status" value="1"/>
</dbReference>
<dbReference type="Gene3D" id="3.40.50.300">
    <property type="entry name" value="P-loop containing nucleotide triphosphate hydrolases"/>
    <property type="match status" value="2"/>
</dbReference>
<dbReference type="InterPro" id="IPR011545">
    <property type="entry name" value="DEAD/DEAH_box_helicase_dom"/>
</dbReference>
<dbReference type="InterPro" id="IPR050079">
    <property type="entry name" value="DEAD_box_RNA_helicase"/>
</dbReference>
<dbReference type="InterPro" id="IPR014001">
    <property type="entry name" value="Helicase_ATP-bd"/>
</dbReference>
<dbReference type="InterPro" id="IPR001650">
    <property type="entry name" value="Helicase_C-like"/>
</dbReference>
<dbReference type="InterPro" id="IPR027417">
    <property type="entry name" value="P-loop_NTPase"/>
</dbReference>
<dbReference type="InterPro" id="IPR000629">
    <property type="entry name" value="RNA-helicase_DEAD-box_CS"/>
</dbReference>
<dbReference type="InterPro" id="IPR014014">
    <property type="entry name" value="RNA_helicase_DEAD_Q_motif"/>
</dbReference>
<dbReference type="PANTHER" id="PTHR47959:SF24">
    <property type="entry name" value="ATP-DEPENDENT RNA HELICASE"/>
    <property type="match status" value="1"/>
</dbReference>
<dbReference type="PANTHER" id="PTHR47959">
    <property type="entry name" value="ATP-DEPENDENT RNA HELICASE RHLE-RELATED"/>
    <property type="match status" value="1"/>
</dbReference>
<dbReference type="Pfam" id="PF00270">
    <property type="entry name" value="DEAD"/>
    <property type="match status" value="1"/>
</dbReference>
<dbReference type="Pfam" id="PF00271">
    <property type="entry name" value="Helicase_C"/>
    <property type="match status" value="1"/>
</dbReference>
<dbReference type="SMART" id="SM00487">
    <property type="entry name" value="DEXDc"/>
    <property type="match status" value="1"/>
</dbReference>
<dbReference type="SMART" id="SM00490">
    <property type="entry name" value="HELICc"/>
    <property type="match status" value="1"/>
</dbReference>
<dbReference type="SUPFAM" id="SSF52540">
    <property type="entry name" value="P-loop containing nucleoside triphosphate hydrolases"/>
    <property type="match status" value="1"/>
</dbReference>
<dbReference type="PROSITE" id="PS00039">
    <property type="entry name" value="DEAD_ATP_HELICASE"/>
    <property type="match status" value="1"/>
</dbReference>
<dbReference type="PROSITE" id="PS51192">
    <property type="entry name" value="HELICASE_ATP_BIND_1"/>
    <property type="match status" value="1"/>
</dbReference>
<dbReference type="PROSITE" id="PS51194">
    <property type="entry name" value="HELICASE_CTER"/>
    <property type="match status" value="1"/>
</dbReference>
<dbReference type="PROSITE" id="PS51195">
    <property type="entry name" value="Q_MOTIF"/>
    <property type="match status" value="1"/>
</dbReference>
<accession>A5DLE0</accession>
<proteinExistence type="inferred from homology"/>
<evidence type="ECO:0000250" key="1"/>
<evidence type="ECO:0000255" key="2">
    <source>
        <dbReference type="PROSITE-ProRule" id="PRU00541"/>
    </source>
</evidence>
<evidence type="ECO:0000255" key="3">
    <source>
        <dbReference type="PROSITE-ProRule" id="PRU00542"/>
    </source>
</evidence>
<evidence type="ECO:0000256" key="4">
    <source>
        <dbReference type="SAM" id="MobiDB-lite"/>
    </source>
</evidence>
<evidence type="ECO:0000305" key="5"/>